<protein>
    <recommendedName>
        <fullName evidence="1">FAD synthase</fullName>
        <ecNumber evidence="1">2.7.7.2</ecNumber>
    </recommendedName>
    <alternativeName>
        <fullName evidence="1">FMN adenylyltransferase</fullName>
    </alternativeName>
    <alternativeName>
        <fullName evidence="1">Flavin adenine dinucleotide synthase</fullName>
    </alternativeName>
</protein>
<accession>Q8TXT2</accession>
<comment type="function">
    <text evidence="1">Catalyzes the transfer of the AMP portion of ATP to flavin mononucleotide (FMN) to produce flavin adenine dinucleotide (FAD) coenzyme.</text>
</comment>
<comment type="catalytic activity">
    <reaction evidence="1">
        <text>FMN + ATP + H(+) = FAD + diphosphate</text>
        <dbReference type="Rhea" id="RHEA:17237"/>
        <dbReference type="ChEBI" id="CHEBI:15378"/>
        <dbReference type="ChEBI" id="CHEBI:30616"/>
        <dbReference type="ChEBI" id="CHEBI:33019"/>
        <dbReference type="ChEBI" id="CHEBI:57692"/>
        <dbReference type="ChEBI" id="CHEBI:58210"/>
        <dbReference type="EC" id="2.7.7.2"/>
    </reaction>
</comment>
<comment type="cofactor">
    <cofactor evidence="1">
        <name>a divalent metal cation</name>
        <dbReference type="ChEBI" id="CHEBI:60240"/>
    </cofactor>
</comment>
<comment type="pathway">
    <text evidence="1">Cofactor biosynthesis; FAD biosynthesis; FAD from FMN: step 1/1.</text>
</comment>
<comment type="subunit">
    <text evidence="1">Homodimer.</text>
</comment>
<comment type="similarity">
    <text evidence="1">Belongs to the archaeal FAD synthase family.</text>
</comment>
<proteinExistence type="inferred from homology"/>
<feature type="chain" id="PRO_0000406265" description="FAD synthase">
    <location>
        <begin position="1"/>
        <end position="150"/>
    </location>
</feature>
<feature type="binding site" evidence="1">
    <location>
        <begin position="10"/>
        <end position="11"/>
    </location>
    <ligand>
        <name>ATP</name>
        <dbReference type="ChEBI" id="CHEBI:30616"/>
    </ligand>
</feature>
<feature type="binding site" evidence="1">
    <location>
        <begin position="15"/>
        <end position="18"/>
    </location>
    <ligand>
        <name>ATP</name>
        <dbReference type="ChEBI" id="CHEBI:30616"/>
    </ligand>
</feature>
<feature type="binding site" evidence="1">
    <location>
        <position position="97"/>
    </location>
    <ligand>
        <name>ATP</name>
        <dbReference type="ChEBI" id="CHEBI:30616"/>
    </ligand>
</feature>
<feature type="binding site" evidence="1">
    <location>
        <position position="124"/>
    </location>
    <ligand>
        <name>ATP</name>
        <dbReference type="ChEBI" id="CHEBI:30616"/>
    </ligand>
</feature>
<sequence length="150" mass="17107">MGKRVLAGGVFDILHPGHVAFLEEARKIAGKNGELVVVVARDETVRRLKRTPIVPEEQRVRMVSALKPVDRAILGHPRDFSITLKTVKPDVVVLGPDQDIDEKEVERWAERAGVDCEVRRIEKYERCPLDSTIKIVKRVIELWKRGELRV</sequence>
<name>RIBL_METKA</name>
<gene>
    <name evidence="1" type="primary">ribL</name>
    <name type="ordered locus">MK0578</name>
</gene>
<organism>
    <name type="scientific">Methanopyrus kandleri (strain AV19 / DSM 6324 / JCM 9639 / NBRC 100938)</name>
    <dbReference type="NCBI Taxonomy" id="190192"/>
    <lineage>
        <taxon>Archaea</taxon>
        <taxon>Methanobacteriati</taxon>
        <taxon>Methanobacteriota</taxon>
        <taxon>Methanomada group</taxon>
        <taxon>Methanopyri</taxon>
        <taxon>Methanopyrales</taxon>
        <taxon>Methanopyraceae</taxon>
        <taxon>Methanopyrus</taxon>
    </lineage>
</organism>
<keyword id="KW-0067">ATP-binding</keyword>
<keyword id="KW-0274">FAD</keyword>
<keyword id="KW-0285">Flavoprotein</keyword>
<keyword id="KW-0288">FMN</keyword>
<keyword id="KW-0547">Nucleotide-binding</keyword>
<keyword id="KW-0548">Nucleotidyltransferase</keyword>
<keyword id="KW-1185">Reference proteome</keyword>
<keyword id="KW-0808">Transferase</keyword>
<reference key="1">
    <citation type="journal article" date="2002" name="Proc. Natl. Acad. Sci. U.S.A.">
        <title>The complete genome of hyperthermophile Methanopyrus kandleri AV19 and monophyly of archaeal methanogens.</title>
        <authorList>
            <person name="Slesarev A.I."/>
            <person name="Mezhevaya K.V."/>
            <person name="Makarova K.S."/>
            <person name="Polushin N.N."/>
            <person name="Shcherbinina O.V."/>
            <person name="Shakhova V.V."/>
            <person name="Belova G.I."/>
            <person name="Aravind L."/>
            <person name="Natale D.A."/>
            <person name="Rogozin I.B."/>
            <person name="Tatusov R.L."/>
            <person name="Wolf Y.I."/>
            <person name="Stetter K.O."/>
            <person name="Malykh A.G."/>
            <person name="Koonin E.V."/>
            <person name="Kozyavkin S.A."/>
        </authorList>
    </citation>
    <scope>NUCLEOTIDE SEQUENCE [LARGE SCALE GENOMIC DNA]</scope>
    <source>
        <strain>AV19 / DSM 6324 / JCM 9639 / NBRC 100938</strain>
    </source>
</reference>
<evidence type="ECO:0000255" key="1">
    <source>
        <dbReference type="HAMAP-Rule" id="MF_02115"/>
    </source>
</evidence>
<dbReference type="EC" id="2.7.7.2" evidence="1"/>
<dbReference type="EMBL" id="AE009439">
    <property type="protein sequence ID" value="AAM01793.1"/>
    <property type="molecule type" value="Genomic_DNA"/>
</dbReference>
<dbReference type="RefSeq" id="WP_011018948.1">
    <property type="nucleotide sequence ID" value="NC_003551.1"/>
</dbReference>
<dbReference type="SMR" id="Q8TXT2"/>
<dbReference type="FunCoup" id="Q8TXT2">
    <property type="interactions" value="9"/>
</dbReference>
<dbReference type="STRING" id="190192.MK0578"/>
<dbReference type="PaxDb" id="190192-MK0578"/>
<dbReference type="EnsemblBacteria" id="AAM01793">
    <property type="protein sequence ID" value="AAM01793"/>
    <property type="gene ID" value="MK0578"/>
</dbReference>
<dbReference type="GeneID" id="1476679"/>
<dbReference type="KEGG" id="mka:MK0578"/>
<dbReference type="PATRIC" id="fig|190192.8.peg.613"/>
<dbReference type="HOGENOM" id="CLU_034585_2_1_2"/>
<dbReference type="InParanoid" id="Q8TXT2"/>
<dbReference type="OrthoDB" id="1912at2157"/>
<dbReference type="UniPathway" id="UPA00277">
    <property type="reaction ID" value="UER00407"/>
</dbReference>
<dbReference type="Proteomes" id="UP000001826">
    <property type="component" value="Chromosome"/>
</dbReference>
<dbReference type="GO" id="GO:0005524">
    <property type="term" value="F:ATP binding"/>
    <property type="evidence" value="ECO:0007669"/>
    <property type="project" value="UniProtKB-UniRule"/>
</dbReference>
<dbReference type="GO" id="GO:0003919">
    <property type="term" value="F:FMN adenylyltransferase activity"/>
    <property type="evidence" value="ECO:0007669"/>
    <property type="project" value="UniProtKB-UniRule"/>
</dbReference>
<dbReference type="GO" id="GO:0006747">
    <property type="term" value="P:FAD biosynthetic process"/>
    <property type="evidence" value="ECO:0007669"/>
    <property type="project" value="UniProtKB-UniRule"/>
</dbReference>
<dbReference type="GO" id="GO:0046444">
    <property type="term" value="P:FMN metabolic process"/>
    <property type="evidence" value="ECO:0007669"/>
    <property type="project" value="UniProtKB-UniRule"/>
</dbReference>
<dbReference type="CDD" id="cd02170">
    <property type="entry name" value="cytidylyltransferase"/>
    <property type="match status" value="1"/>
</dbReference>
<dbReference type="Gene3D" id="3.40.50.620">
    <property type="entry name" value="HUPs"/>
    <property type="match status" value="1"/>
</dbReference>
<dbReference type="HAMAP" id="MF_02115">
    <property type="entry name" value="FAD_synth_arch"/>
    <property type="match status" value="1"/>
</dbReference>
<dbReference type="InterPro" id="IPR050385">
    <property type="entry name" value="Archaeal_FAD_synthase"/>
</dbReference>
<dbReference type="InterPro" id="IPR004821">
    <property type="entry name" value="Cyt_trans-like"/>
</dbReference>
<dbReference type="InterPro" id="IPR024902">
    <property type="entry name" value="FAD_synth_RibL"/>
</dbReference>
<dbReference type="InterPro" id="IPR014729">
    <property type="entry name" value="Rossmann-like_a/b/a_fold"/>
</dbReference>
<dbReference type="NCBIfam" id="TIGR00125">
    <property type="entry name" value="cyt_tran_rel"/>
    <property type="match status" value="1"/>
</dbReference>
<dbReference type="PANTHER" id="PTHR43793">
    <property type="entry name" value="FAD SYNTHASE"/>
    <property type="match status" value="1"/>
</dbReference>
<dbReference type="PANTHER" id="PTHR43793:SF1">
    <property type="entry name" value="FAD SYNTHASE"/>
    <property type="match status" value="1"/>
</dbReference>
<dbReference type="Pfam" id="PF01467">
    <property type="entry name" value="CTP_transf_like"/>
    <property type="match status" value="1"/>
</dbReference>
<dbReference type="SUPFAM" id="SSF52374">
    <property type="entry name" value="Nucleotidylyl transferase"/>
    <property type="match status" value="1"/>
</dbReference>